<evidence type="ECO:0000250" key="1"/>
<evidence type="ECO:0000255" key="2">
    <source>
        <dbReference type="PROSITE-ProRule" id="PRU00159"/>
    </source>
</evidence>
<evidence type="ECO:0000255" key="3">
    <source>
        <dbReference type="PROSITE-ProRule" id="PRU10027"/>
    </source>
</evidence>
<evidence type="ECO:0000256" key="4">
    <source>
        <dbReference type="SAM" id="MobiDB-lite"/>
    </source>
</evidence>
<evidence type="ECO:0000305" key="5"/>
<reference key="1">
    <citation type="journal article" date="2004" name="Nature">
        <title>Genome evolution in yeasts.</title>
        <authorList>
            <person name="Dujon B."/>
            <person name="Sherman D."/>
            <person name="Fischer G."/>
            <person name="Durrens P."/>
            <person name="Casaregola S."/>
            <person name="Lafontaine I."/>
            <person name="de Montigny J."/>
            <person name="Marck C."/>
            <person name="Neuveglise C."/>
            <person name="Talla E."/>
            <person name="Goffard N."/>
            <person name="Frangeul L."/>
            <person name="Aigle M."/>
            <person name="Anthouard V."/>
            <person name="Babour A."/>
            <person name="Barbe V."/>
            <person name="Barnay S."/>
            <person name="Blanchin S."/>
            <person name="Beckerich J.-M."/>
            <person name="Beyne E."/>
            <person name="Bleykasten C."/>
            <person name="Boisrame A."/>
            <person name="Boyer J."/>
            <person name="Cattolico L."/>
            <person name="Confanioleri F."/>
            <person name="de Daruvar A."/>
            <person name="Despons L."/>
            <person name="Fabre E."/>
            <person name="Fairhead C."/>
            <person name="Ferry-Dumazet H."/>
            <person name="Groppi A."/>
            <person name="Hantraye F."/>
            <person name="Hennequin C."/>
            <person name="Jauniaux N."/>
            <person name="Joyet P."/>
            <person name="Kachouri R."/>
            <person name="Kerrest A."/>
            <person name="Koszul R."/>
            <person name="Lemaire M."/>
            <person name="Lesur I."/>
            <person name="Ma L."/>
            <person name="Muller H."/>
            <person name="Nicaud J.-M."/>
            <person name="Nikolski M."/>
            <person name="Oztas S."/>
            <person name="Ozier-Kalogeropoulos O."/>
            <person name="Pellenz S."/>
            <person name="Potier S."/>
            <person name="Richard G.-F."/>
            <person name="Straub M.-L."/>
            <person name="Suleau A."/>
            <person name="Swennen D."/>
            <person name="Tekaia F."/>
            <person name="Wesolowski-Louvel M."/>
            <person name="Westhof E."/>
            <person name="Wirth B."/>
            <person name="Zeniou-Meyer M."/>
            <person name="Zivanovic Y."/>
            <person name="Bolotin-Fukuhara M."/>
            <person name="Thierry A."/>
            <person name="Bouchier C."/>
            <person name="Caudron B."/>
            <person name="Scarpelli C."/>
            <person name="Gaillardin C."/>
            <person name="Weissenbach J."/>
            <person name="Wincker P."/>
            <person name="Souciet J.-L."/>
        </authorList>
    </citation>
    <scope>NUCLEOTIDE SEQUENCE [LARGE SCALE GENOMIC DNA]</scope>
    <source>
        <strain>ATCC 2001 / BCRC 20586 / JCM 3761 / NBRC 0622 / NRRL Y-65 / CBS 138</strain>
    </source>
</reference>
<name>BUR1_CANGA</name>
<keyword id="KW-0067">ATP-binding</keyword>
<keyword id="KW-0418">Kinase</keyword>
<keyword id="KW-0547">Nucleotide-binding</keyword>
<keyword id="KW-0539">Nucleus</keyword>
<keyword id="KW-1185">Reference proteome</keyword>
<keyword id="KW-0723">Serine/threonine-protein kinase</keyword>
<keyword id="KW-0808">Transferase</keyword>
<sequence length="667" mass="75961">MSQENSNVPALKRTESKYKIGRVKSLPTVQIDEKTGDSYIELAPRSEGKIYGCTTFQGNYKEEEKLGQGTFGEVYKGLHLQTQRKVAMKRIIVNQENDLFPITAQREITILKRLNHKNIIKLLEMVYDFPPESNNKDYAQFNQNNSANPPAVPKKFFYMILPYMVADLSGILHNPRIELKMADIKNMMKQILEGVNFIHCSKFMHRDIKTANLLIDHNGVLKLADFGLARQYYGSPPNIKFPGSAGSGAKYTSVVVTRWYRAPELVLGDKYYTTAVDIWGVGCVFAEFFEKKPILQGKTDIDQGHVIFKLMGTPDERTWELAKYLPGAELTKTEYKSTIDERFGKHLTPTGLSFLKGLLALDPYKRLTAMSAMKHPFFQEEPLAADRLTLPCEESHEADIKRYKEELHEAMSQKGPSAPPGHIKEATPSPAKFEKKSGIKREQPYQSNQKNDQYPIKRQKFNQNPSVPHPQPKANRYGGSSLPSGPKYGRYEGNNHSGSLRNRITPSNMGTHSNPRAENMGSKPYQSEGRYSSNEDRKNGYNRGYSSSVNSRYNNRAAFNETEDQSITTTTLNRYRHKGYHDNNQSQTRLQGHSSLPGKPTSKYNSTQTNIPYRRTEIPNPNEYNASKLGSQDTKKNDYPKHSETQKQQNNEEKKIHSEQKDIADLY</sequence>
<dbReference type="EC" id="2.7.11.22"/>
<dbReference type="EC" id="2.7.11.23"/>
<dbReference type="EMBL" id="CR380955">
    <property type="protein sequence ID" value="CAG60548.1"/>
    <property type="molecule type" value="Genomic_DNA"/>
</dbReference>
<dbReference type="RefSeq" id="XP_447611.1">
    <property type="nucleotide sequence ID" value="XM_447611.1"/>
</dbReference>
<dbReference type="SMR" id="Q6FQ83"/>
<dbReference type="FunCoup" id="Q6FQ83">
    <property type="interactions" value="328"/>
</dbReference>
<dbReference type="STRING" id="284593.Q6FQ83"/>
<dbReference type="EnsemblFungi" id="CAGL0I08349g-T">
    <property type="protein sequence ID" value="CAGL0I08349g-T-p1"/>
    <property type="gene ID" value="CAGL0I08349g"/>
</dbReference>
<dbReference type="KEGG" id="cgr:2889404"/>
<dbReference type="CGD" id="CAL0132354">
    <property type="gene designation" value="CAGL0I08349g"/>
</dbReference>
<dbReference type="VEuPathDB" id="FungiDB:CAGL0I08349g"/>
<dbReference type="eggNOG" id="KOG0600">
    <property type="taxonomic scope" value="Eukaryota"/>
</dbReference>
<dbReference type="HOGENOM" id="CLU_000288_167_0_1"/>
<dbReference type="InParanoid" id="Q6FQ83"/>
<dbReference type="OMA" id="PDERTWE"/>
<dbReference type="Proteomes" id="UP000002428">
    <property type="component" value="Chromosome I"/>
</dbReference>
<dbReference type="GO" id="GO:0000307">
    <property type="term" value="C:cyclin-dependent protein kinase holoenzyme complex"/>
    <property type="evidence" value="ECO:0007669"/>
    <property type="project" value="EnsemblFungi"/>
</dbReference>
<dbReference type="GO" id="GO:0005634">
    <property type="term" value="C:nucleus"/>
    <property type="evidence" value="ECO:0007669"/>
    <property type="project" value="UniProtKB-SubCell"/>
</dbReference>
<dbReference type="GO" id="GO:0005524">
    <property type="term" value="F:ATP binding"/>
    <property type="evidence" value="ECO:0007669"/>
    <property type="project" value="UniProtKB-KW"/>
</dbReference>
<dbReference type="GO" id="GO:0004693">
    <property type="term" value="F:cyclin-dependent protein serine/threonine kinase activity"/>
    <property type="evidence" value="ECO:0007669"/>
    <property type="project" value="UniProtKB-EC"/>
</dbReference>
<dbReference type="GO" id="GO:0106310">
    <property type="term" value="F:protein serine kinase activity"/>
    <property type="evidence" value="ECO:0007669"/>
    <property type="project" value="RHEA"/>
</dbReference>
<dbReference type="GO" id="GO:0008353">
    <property type="term" value="F:RNA polymerase II CTD heptapeptide repeat kinase activity"/>
    <property type="evidence" value="ECO:0007669"/>
    <property type="project" value="UniProtKB-EC"/>
</dbReference>
<dbReference type="GO" id="GO:0032968">
    <property type="term" value="P:positive regulation of transcription elongation by RNA polymerase II"/>
    <property type="evidence" value="ECO:0007669"/>
    <property type="project" value="EnsemblFungi"/>
</dbReference>
<dbReference type="GO" id="GO:0006368">
    <property type="term" value="P:transcription elongation by RNA polymerase II"/>
    <property type="evidence" value="ECO:0007669"/>
    <property type="project" value="EnsemblFungi"/>
</dbReference>
<dbReference type="FunFam" id="1.10.510.10:FF:000624">
    <property type="entry name" value="Mitogen-activated protein kinase"/>
    <property type="match status" value="1"/>
</dbReference>
<dbReference type="Gene3D" id="3.30.200.20">
    <property type="entry name" value="Phosphorylase Kinase, domain 1"/>
    <property type="match status" value="1"/>
</dbReference>
<dbReference type="Gene3D" id="1.10.510.10">
    <property type="entry name" value="Transferase(Phosphotransferase) domain 1"/>
    <property type="match status" value="1"/>
</dbReference>
<dbReference type="InterPro" id="IPR050108">
    <property type="entry name" value="CDK"/>
</dbReference>
<dbReference type="InterPro" id="IPR011009">
    <property type="entry name" value="Kinase-like_dom_sf"/>
</dbReference>
<dbReference type="InterPro" id="IPR000719">
    <property type="entry name" value="Prot_kinase_dom"/>
</dbReference>
<dbReference type="InterPro" id="IPR017441">
    <property type="entry name" value="Protein_kinase_ATP_BS"/>
</dbReference>
<dbReference type="InterPro" id="IPR008271">
    <property type="entry name" value="Ser/Thr_kinase_AS"/>
</dbReference>
<dbReference type="PANTHER" id="PTHR24056">
    <property type="entry name" value="CELL DIVISION PROTEIN KINASE"/>
    <property type="match status" value="1"/>
</dbReference>
<dbReference type="PANTHER" id="PTHR24056:SF233">
    <property type="entry name" value="CYCLIN-DEPENDENT KINASE 9"/>
    <property type="match status" value="1"/>
</dbReference>
<dbReference type="Pfam" id="PF00069">
    <property type="entry name" value="Pkinase"/>
    <property type="match status" value="1"/>
</dbReference>
<dbReference type="SMART" id="SM00220">
    <property type="entry name" value="S_TKc"/>
    <property type="match status" value="1"/>
</dbReference>
<dbReference type="SUPFAM" id="SSF56112">
    <property type="entry name" value="Protein kinase-like (PK-like)"/>
    <property type="match status" value="1"/>
</dbReference>
<dbReference type="PROSITE" id="PS00107">
    <property type="entry name" value="PROTEIN_KINASE_ATP"/>
    <property type="match status" value="1"/>
</dbReference>
<dbReference type="PROSITE" id="PS50011">
    <property type="entry name" value="PROTEIN_KINASE_DOM"/>
    <property type="match status" value="1"/>
</dbReference>
<dbReference type="PROSITE" id="PS00108">
    <property type="entry name" value="PROTEIN_KINASE_ST"/>
    <property type="match status" value="1"/>
</dbReference>
<proteinExistence type="inferred from homology"/>
<organism>
    <name type="scientific">Candida glabrata (strain ATCC 2001 / BCRC 20586 / JCM 3761 / NBRC 0622 / NRRL Y-65 / CBS 138)</name>
    <name type="common">Yeast</name>
    <name type="synonym">Nakaseomyces glabratus</name>
    <dbReference type="NCBI Taxonomy" id="284593"/>
    <lineage>
        <taxon>Eukaryota</taxon>
        <taxon>Fungi</taxon>
        <taxon>Dikarya</taxon>
        <taxon>Ascomycota</taxon>
        <taxon>Saccharomycotina</taxon>
        <taxon>Saccharomycetes</taxon>
        <taxon>Saccharomycetales</taxon>
        <taxon>Saccharomycetaceae</taxon>
        <taxon>Nakaseomyces</taxon>
    </lineage>
</organism>
<accession>Q6FQ83</accession>
<comment type="function">
    <text evidence="1">Serine/threonine-protein kinase involved in transcription regulation. Phosphorylates the UBC2/RAD6 ubiquitin-conjugating enzyme (E2), leading to monoubiquitination of histone H2B and the silencing of telomeric-associated genes. Also required for histone H3 methylation. Necessary for the recovery from pheromone-induced growth arrest in the cell cycle G1 phase (By similarity).</text>
</comment>
<comment type="catalytic activity">
    <reaction>
        <text>L-seryl-[protein] + ATP = O-phospho-L-seryl-[protein] + ADP + H(+)</text>
        <dbReference type="Rhea" id="RHEA:17989"/>
        <dbReference type="Rhea" id="RHEA-COMP:9863"/>
        <dbReference type="Rhea" id="RHEA-COMP:11604"/>
        <dbReference type="ChEBI" id="CHEBI:15378"/>
        <dbReference type="ChEBI" id="CHEBI:29999"/>
        <dbReference type="ChEBI" id="CHEBI:30616"/>
        <dbReference type="ChEBI" id="CHEBI:83421"/>
        <dbReference type="ChEBI" id="CHEBI:456216"/>
        <dbReference type="EC" id="2.7.11.22"/>
    </reaction>
</comment>
<comment type="catalytic activity">
    <reaction>
        <text>L-threonyl-[protein] + ATP = O-phospho-L-threonyl-[protein] + ADP + H(+)</text>
        <dbReference type="Rhea" id="RHEA:46608"/>
        <dbReference type="Rhea" id="RHEA-COMP:11060"/>
        <dbReference type="Rhea" id="RHEA-COMP:11605"/>
        <dbReference type="ChEBI" id="CHEBI:15378"/>
        <dbReference type="ChEBI" id="CHEBI:30013"/>
        <dbReference type="ChEBI" id="CHEBI:30616"/>
        <dbReference type="ChEBI" id="CHEBI:61977"/>
        <dbReference type="ChEBI" id="CHEBI:456216"/>
        <dbReference type="EC" id="2.7.11.22"/>
    </reaction>
</comment>
<comment type="catalytic activity">
    <reaction>
        <text>[DNA-directed RNA polymerase] + ATP = phospho-[DNA-directed RNA polymerase] + ADP + H(+)</text>
        <dbReference type="Rhea" id="RHEA:10216"/>
        <dbReference type="Rhea" id="RHEA-COMP:11321"/>
        <dbReference type="Rhea" id="RHEA-COMP:11322"/>
        <dbReference type="ChEBI" id="CHEBI:15378"/>
        <dbReference type="ChEBI" id="CHEBI:30616"/>
        <dbReference type="ChEBI" id="CHEBI:43176"/>
        <dbReference type="ChEBI" id="CHEBI:68546"/>
        <dbReference type="ChEBI" id="CHEBI:456216"/>
        <dbReference type="EC" id="2.7.11.23"/>
    </reaction>
</comment>
<comment type="subcellular location">
    <subcellularLocation>
        <location evidence="1">Nucleus</location>
    </subcellularLocation>
</comment>
<comment type="similarity">
    <text evidence="5">Belongs to the protein kinase superfamily. CMGC Ser/Thr protein kinase family. CDC2/CDKX subfamily.</text>
</comment>
<feature type="chain" id="PRO_0000085680" description="Serine/threonine-protein kinase BUR1">
    <location>
        <begin position="1"/>
        <end position="667"/>
    </location>
</feature>
<feature type="domain" description="Protein kinase" evidence="2">
    <location>
        <begin position="60"/>
        <end position="378"/>
    </location>
</feature>
<feature type="region of interest" description="Disordered" evidence="4">
    <location>
        <begin position="408"/>
        <end position="667"/>
    </location>
</feature>
<feature type="compositionally biased region" description="Basic and acidic residues" evidence="4">
    <location>
        <begin position="432"/>
        <end position="443"/>
    </location>
</feature>
<feature type="compositionally biased region" description="Polar residues" evidence="4">
    <location>
        <begin position="494"/>
        <end position="516"/>
    </location>
</feature>
<feature type="compositionally biased region" description="Low complexity" evidence="4">
    <location>
        <begin position="541"/>
        <end position="556"/>
    </location>
</feature>
<feature type="compositionally biased region" description="Polar residues" evidence="4">
    <location>
        <begin position="582"/>
        <end position="594"/>
    </location>
</feature>
<feature type="compositionally biased region" description="Polar residues" evidence="4">
    <location>
        <begin position="602"/>
        <end position="611"/>
    </location>
</feature>
<feature type="compositionally biased region" description="Polar residues" evidence="4">
    <location>
        <begin position="622"/>
        <end position="632"/>
    </location>
</feature>
<feature type="compositionally biased region" description="Basic and acidic residues" evidence="4">
    <location>
        <begin position="633"/>
        <end position="667"/>
    </location>
</feature>
<feature type="active site" description="Proton acceptor" evidence="2 3">
    <location>
        <position position="207"/>
    </location>
</feature>
<feature type="binding site" evidence="2">
    <location>
        <begin position="66"/>
        <end position="74"/>
    </location>
    <ligand>
        <name>ATP</name>
        <dbReference type="ChEBI" id="CHEBI:30616"/>
    </ligand>
</feature>
<feature type="binding site" evidence="2">
    <location>
        <position position="89"/>
    </location>
    <ligand>
        <name>ATP</name>
        <dbReference type="ChEBI" id="CHEBI:30616"/>
    </ligand>
</feature>
<gene>
    <name type="primary">BUR1</name>
    <name type="ordered locus">CAGL0I08349g</name>
</gene>
<protein>
    <recommendedName>
        <fullName>Serine/threonine-protein kinase BUR1</fullName>
        <ecNumber>2.7.11.22</ecNumber>
        <ecNumber>2.7.11.23</ecNumber>
    </recommendedName>
</protein>